<name>RLMN_SACEN</name>
<keyword id="KW-0004">4Fe-4S</keyword>
<keyword id="KW-0963">Cytoplasm</keyword>
<keyword id="KW-1015">Disulfide bond</keyword>
<keyword id="KW-0408">Iron</keyword>
<keyword id="KW-0411">Iron-sulfur</keyword>
<keyword id="KW-0479">Metal-binding</keyword>
<keyword id="KW-0489">Methyltransferase</keyword>
<keyword id="KW-1185">Reference proteome</keyword>
<keyword id="KW-0698">rRNA processing</keyword>
<keyword id="KW-0949">S-adenosyl-L-methionine</keyword>
<keyword id="KW-0808">Transferase</keyword>
<keyword id="KW-0819">tRNA processing</keyword>
<sequence>MSASLPLVFDAPRRGMPPRHLADLSADERRAAVTELGEKPFRARQLAHHYFGRLNADVESMTDIPAGSRAKLGADLLPTLLTPVRNLDTDEGTTRKTLWRAHDGTLLESVLMRYPDRATVCISSQAGCGMACPFCATGQGGLQRNLSTAEIVDQVRSAAAMMRDGEVPGGPGRLSNVVFMGMGEPLANYKRVINAVHRICDPAPEGLGLSQRSVTVSTVGLVPAIRRMTAEDLHVTLAVSLHTPDDELRDTLVPVNNRWKVEEVLQAARGYADHTGRRVSIEYALIRDINDQPWRADLLGKLLHKHLGQFVHVNLIPLNPTPGSKWDASPKPVEREFVRRVREAGVPCTVRDTRGQEIAAACGQLAAEE</sequence>
<reference key="1">
    <citation type="journal article" date="2007" name="Nat. Biotechnol.">
        <title>Complete genome sequence of the erythromycin-producing bacterium Saccharopolyspora erythraea NRRL23338.</title>
        <authorList>
            <person name="Oliynyk M."/>
            <person name="Samborskyy M."/>
            <person name="Lester J.B."/>
            <person name="Mironenko T."/>
            <person name="Scott N."/>
            <person name="Dickens S."/>
            <person name="Haydock S.F."/>
            <person name="Leadlay P.F."/>
        </authorList>
    </citation>
    <scope>NUCLEOTIDE SEQUENCE [LARGE SCALE GENOMIC DNA]</scope>
    <source>
        <strain>ATCC 11635 / DSM 40517 / JCM 4748 / NBRC 13426 / NCIMB 8594 / NRRL 2338</strain>
    </source>
</reference>
<accession>A4FMC5</accession>
<dbReference type="EC" id="2.1.1.192" evidence="1"/>
<dbReference type="EMBL" id="AM420293">
    <property type="protein sequence ID" value="CAM05200.1"/>
    <property type="molecule type" value="Genomic_DNA"/>
</dbReference>
<dbReference type="RefSeq" id="WP_009943649.1">
    <property type="nucleotide sequence ID" value="NC_009142.1"/>
</dbReference>
<dbReference type="SMR" id="A4FMC5"/>
<dbReference type="STRING" id="405948.SACE_6026"/>
<dbReference type="KEGG" id="sen:SACE_6026"/>
<dbReference type="eggNOG" id="COG0820">
    <property type="taxonomic scope" value="Bacteria"/>
</dbReference>
<dbReference type="HOGENOM" id="CLU_029101_0_2_11"/>
<dbReference type="OrthoDB" id="9793973at2"/>
<dbReference type="Proteomes" id="UP000006728">
    <property type="component" value="Chromosome"/>
</dbReference>
<dbReference type="GO" id="GO:0005737">
    <property type="term" value="C:cytoplasm"/>
    <property type="evidence" value="ECO:0007669"/>
    <property type="project" value="UniProtKB-SubCell"/>
</dbReference>
<dbReference type="GO" id="GO:0051539">
    <property type="term" value="F:4 iron, 4 sulfur cluster binding"/>
    <property type="evidence" value="ECO:0007669"/>
    <property type="project" value="UniProtKB-UniRule"/>
</dbReference>
<dbReference type="GO" id="GO:0046872">
    <property type="term" value="F:metal ion binding"/>
    <property type="evidence" value="ECO:0007669"/>
    <property type="project" value="UniProtKB-KW"/>
</dbReference>
<dbReference type="GO" id="GO:0070040">
    <property type="term" value="F:rRNA (adenine(2503)-C2-)-methyltransferase activity"/>
    <property type="evidence" value="ECO:0007669"/>
    <property type="project" value="UniProtKB-UniRule"/>
</dbReference>
<dbReference type="GO" id="GO:0019843">
    <property type="term" value="F:rRNA binding"/>
    <property type="evidence" value="ECO:0007669"/>
    <property type="project" value="UniProtKB-UniRule"/>
</dbReference>
<dbReference type="GO" id="GO:0002935">
    <property type="term" value="F:tRNA (adenine(37)-C2)-methyltransferase activity"/>
    <property type="evidence" value="ECO:0007669"/>
    <property type="project" value="UniProtKB-UniRule"/>
</dbReference>
<dbReference type="GO" id="GO:0000049">
    <property type="term" value="F:tRNA binding"/>
    <property type="evidence" value="ECO:0007669"/>
    <property type="project" value="UniProtKB-UniRule"/>
</dbReference>
<dbReference type="GO" id="GO:0070475">
    <property type="term" value="P:rRNA base methylation"/>
    <property type="evidence" value="ECO:0007669"/>
    <property type="project" value="UniProtKB-UniRule"/>
</dbReference>
<dbReference type="GO" id="GO:0030488">
    <property type="term" value="P:tRNA methylation"/>
    <property type="evidence" value="ECO:0007669"/>
    <property type="project" value="UniProtKB-UniRule"/>
</dbReference>
<dbReference type="CDD" id="cd01335">
    <property type="entry name" value="Radical_SAM"/>
    <property type="match status" value="1"/>
</dbReference>
<dbReference type="FunFam" id="3.20.20.70:FF:000014">
    <property type="entry name" value="Probable dual-specificity RNA methyltransferase RlmN"/>
    <property type="match status" value="1"/>
</dbReference>
<dbReference type="Gene3D" id="1.10.150.530">
    <property type="match status" value="1"/>
</dbReference>
<dbReference type="Gene3D" id="3.20.20.70">
    <property type="entry name" value="Aldolase class I"/>
    <property type="match status" value="1"/>
</dbReference>
<dbReference type="HAMAP" id="MF_01849">
    <property type="entry name" value="RNA_methyltr_RlmN"/>
    <property type="match status" value="1"/>
</dbReference>
<dbReference type="InterPro" id="IPR013785">
    <property type="entry name" value="Aldolase_TIM"/>
</dbReference>
<dbReference type="InterPro" id="IPR040072">
    <property type="entry name" value="Methyltransferase_A"/>
</dbReference>
<dbReference type="InterPro" id="IPR048641">
    <property type="entry name" value="RlmN_N"/>
</dbReference>
<dbReference type="InterPro" id="IPR027492">
    <property type="entry name" value="RNA_MTrfase_RlmN"/>
</dbReference>
<dbReference type="InterPro" id="IPR004383">
    <property type="entry name" value="rRNA_lsu_MTrfase_RlmN/Cfr"/>
</dbReference>
<dbReference type="InterPro" id="IPR007197">
    <property type="entry name" value="rSAM"/>
</dbReference>
<dbReference type="NCBIfam" id="TIGR00048">
    <property type="entry name" value="rRNA_mod_RlmN"/>
    <property type="match status" value="1"/>
</dbReference>
<dbReference type="PANTHER" id="PTHR30544">
    <property type="entry name" value="23S RRNA METHYLTRANSFERASE"/>
    <property type="match status" value="1"/>
</dbReference>
<dbReference type="PANTHER" id="PTHR30544:SF5">
    <property type="entry name" value="RADICAL SAM CORE DOMAIN-CONTAINING PROTEIN"/>
    <property type="match status" value="1"/>
</dbReference>
<dbReference type="Pfam" id="PF04055">
    <property type="entry name" value="Radical_SAM"/>
    <property type="match status" value="1"/>
</dbReference>
<dbReference type="Pfam" id="PF21016">
    <property type="entry name" value="RlmN_N"/>
    <property type="match status" value="1"/>
</dbReference>
<dbReference type="PIRSF" id="PIRSF006004">
    <property type="entry name" value="CHP00048"/>
    <property type="match status" value="1"/>
</dbReference>
<dbReference type="SFLD" id="SFLDF00275">
    <property type="entry name" value="adenosine_C2_methyltransferase"/>
    <property type="match status" value="1"/>
</dbReference>
<dbReference type="SFLD" id="SFLDS00029">
    <property type="entry name" value="Radical_SAM"/>
    <property type="match status" value="1"/>
</dbReference>
<dbReference type="SUPFAM" id="SSF102114">
    <property type="entry name" value="Radical SAM enzymes"/>
    <property type="match status" value="1"/>
</dbReference>
<dbReference type="PROSITE" id="PS51918">
    <property type="entry name" value="RADICAL_SAM"/>
    <property type="match status" value="1"/>
</dbReference>
<gene>
    <name evidence="1" type="primary">rlmN</name>
    <name type="ordered locus">SACE_6026</name>
</gene>
<organism>
    <name type="scientific">Saccharopolyspora erythraea (strain ATCC 11635 / DSM 40517 / JCM 4748 / NBRC 13426 / NCIMB 8594 / NRRL 2338)</name>
    <dbReference type="NCBI Taxonomy" id="405948"/>
    <lineage>
        <taxon>Bacteria</taxon>
        <taxon>Bacillati</taxon>
        <taxon>Actinomycetota</taxon>
        <taxon>Actinomycetes</taxon>
        <taxon>Pseudonocardiales</taxon>
        <taxon>Pseudonocardiaceae</taxon>
        <taxon>Saccharopolyspora</taxon>
    </lineage>
</organism>
<proteinExistence type="inferred from homology"/>
<feature type="chain" id="PRO_0000350381" description="Probable dual-specificity RNA methyltransferase RlmN">
    <location>
        <begin position="1"/>
        <end position="369"/>
    </location>
</feature>
<feature type="domain" description="Radical SAM core" evidence="2">
    <location>
        <begin position="114"/>
        <end position="357"/>
    </location>
</feature>
<feature type="active site" description="Proton acceptor" evidence="1">
    <location>
        <position position="108"/>
    </location>
</feature>
<feature type="active site" description="S-methylcysteine intermediate" evidence="1">
    <location>
        <position position="362"/>
    </location>
</feature>
<feature type="binding site" evidence="1">
    <location>
        <position position="128"/>
    </location>
    <ligand>
        <name>[4Fe-4S] cluster</name>
        <dbReference type="ChEBI" id="CHEBI:49883"/>
        <note>4Fe-4S-S-AdoMet</note>
    </ligand>
</feature>
<feature type="binding site" evidence="1">
    <location>
        <position position="132"/>
    </location>
    <ligand>
        <name>[4Fe-4S] cluster</name>
        <dbReference type="ChEBI" id="CHEBI:49883"/>
        <note>4Fe-4S-S-AdoMet</note>
    </ligand>
</feature>
<feature type="binding site" evidence="1">
    <location>
        <position position="135"/>
    </location>
    <ligand>
        <name>[4Fe-4S] cluster</name>
        <dbReference type="ChEBI" id="CHEBI:49883"/>
        <note>4Fe-4S-S-AdoMet</note>
    </ligand>
</feature>
<feature type="binding site" evidence="1">
    <location>
        <begin position="183"/>
        <end position="184"/>
    </location>
    <ligand>
        <name>S-adenosyl-L-methionine</name>
        <dbReference type="ChEBI" id="CHEBI:59789"/>
    </ligand>
</feature>
<feature type="binding site" evidence="1">
    <location>
        <position position="217"/>
    </location>
    <ligand>
        <name>S-adenosyl-L-methionine</name>
        <dbReference type="ChEBI" id="CHEBI:59789"/>
    </ligand>
</feature>
<feature type="binding site" evidence="1">
    <location>
        <begin position="240"/>
        <end position="242"/>
    </location>
    <ligand>
        <name>S-adenosyl-L-methionine</name>
        <dbReference type="ChEBI" id="CHEBI:59789"/>
    </ligand>
</feature>
<feature type="binding site" evidence="1">
    <location>
        <position position="319"/>
    </location>
    <ligand>
        <name>S-adenosyl-L-methionine</name>
        <dbReference type="ChEBI" id="CHEBI:59789"/>
    </ligand>
</feature>
<feature type="disulfide bond" description="(transient)" evidence="1">
    <location>
        <begin position="121"/>
        <end position="362"/>
    </location>
</feature>
<protein>
    <recommendedName>
        <fullName evidence="1">Probable dual-specificity RNA methyltransferase RlmN</fullName>
        <ecNumber evidence="1">2.1.1.192</ecNumber>
    </recommendedName>
    <alternativeName>
        <fullName evidence="1">23S rRNA (adenine(2503)-C(2))-methyltransferase</fullName>
    </alternativeName>
    <alternativeName>
        <fullName evidence="1">23S rRNA m2A2503 methyltransferase</fullName>
    </alternativeName>
    <alternativeName>
        <fullName evidence="1">Ribosomal RNA large subunit methyltransferase N</fullName>
    </alternativeName>
    <alternativeName>
        <fullName evidence="1">tRNA (adenine(37)-C(2))-methyltransferase</fullName>
    </alternativeName>
    <alternativeName>
        <fullName evidence="1">tRNA m2A37 methyltransferase</fullName>
    </alternativeName>
</protein>
<comment type="function">
    <text evidence="1">Specifically methylates position 2 of adenine 2503 in 23S rRNA and position 2 of adenine 37 in tRNAs.</text>
</comment>
<comment type="catalytic activity">
    <reaction evidence="1">
        <text>adenosine(2503) in 23S rRNA + 2 reduced [2Fe-2S]-[ferredoxin] + 2 S-adenosyl-L-methionine = 2-methyladenosine(2503) in 23S rRNA + 5'-deoxyadenosine + L-methionine + 2 oxidized [2Fe-2S]-[ferredoxin] + S-adenosyl-L-homocysteine</text>
        <dbReference type="Rhea" id="RHEA:42916"/>
        <dbReference type="Rhea" id="RHEA-COMP:10000"/>
        <dbReference type="Rhea" id="RHEA-COMP:10001"/>
        <dbReference type="Rhea" id="RHEA-COMP:10152"/>
        <dbReference type="Rhea" id="RHEA-COMP:10282"/>
        <dbReference type="ChEBI" id="CHEBI:17319"/>
        <dbReference type="ChEBI" id="CHEBI:33737"/>
        <dbReference type="ChEBI" id="CHEBI:33738"/>
        <dbReference type="ChEBI" id="CHEBI:57844"/>
        <dbReference type="ChEBI" id="CHEBI:57856"/>
        <dbReference type="ChEBI" id="CHEBI:59789"/>
        <dbReference type="ChEBI" id="CHEBI:74411"/>
        <dbReference type="ChEBI" id="CHEBI:74497"/>
        <dbReference type="EC" id="2.1.1.192"/>
    </reaction>
</comment>
<comment type="catalytic activity">
    <reaction evidence="1">
        <text>adenosine(37) in tRNA + 2 reduced [2Fe-2S]-[ferredoxin] + 2 S-adenosyl-L-methionine = 2-methyladenosine(37) in tRNA + 5'-deoxyadenosine + L-methionine + 2 oxidized [2Fe-2S]-[ferredoxin] + S-adenosyl-L-homocysteine</text>
        <dbReference type="Rhea" id="RHEA:43332"/>
        <dbReference type="Rhea" id="RHEA-COMP:10000"/>
        <dbReference type="Rhea" id="RHEA-COMP:10001"/>
        <dbReference type="Rhea" id="RHEA-COMP:10162"/>
        <dbReference type="Rhea" id="RHEA-COMP:10485"/>
        <dbReference type="ChEBI" id="CHEBI:17319"/>
        <dbReference type="ChEBI" id="CHEBI:33737"/>
        <dbReference type="ChEBI" id="CHEBI:33738"/>
        <dbReference type="ChEBI" id="CHEBI:57844"/>
        <dbReference type="ChEBI" id="CHEBI:57856"/>
        <dbReference type="ChEBI" id="CHEBI:59789"/>
        <dbReference type="ChEBI" id="CHEBI:74411"/>
        <dbReference type="ChEBI" id="CHEBI:74497"/>
        <dbReference type="EC" id="2.1.1.192"/>
    </reaction>
</comment>
<comment type="cofactor">
    <cofactor evidence="1">
        <name>[4Fe-4S] cluster</name>
        <dbReference type="ChEBI" id="CHEBI:49883"/>
    </cofactor>
    <text evidence="1">Binds 1 [4Fe-4S] cluster. The cluster is coordinated with 3 cysteines and an exchangeable S-adenosyl-L-methionine.</text>
</comment>
<comment type="subcellular location">
    <subcellularLocation>
        <location evidence="1">Cytoplasm</location>
    </subcellularLocation>
</comment>
<comment type="miscellaneous">
    <text evidence="1">Reaction proceeds by a ping-pong mechanism involving intermediate methylation of a conserved cysteine residue.</text>
</comment>
<comment type="similarity">
    <text evidence="1">Belongs to the radical SAM superfamily. RlmN family.</text>
</comment>
<evidence type="ECO:0000255" key="1">
    <source>
        <dbReference type="HAMAP-Rule" id="MF_01849"/>
    </source>
</evidence>
<evidence type="ECO:0000255" key="2">
    <source>
        <dbReference type="PROSITE-ProRule" id="PRU01266"/>
    </source>
</evidence>